<feature type="chain" id="PRO_1000012699" description="ATP-dependent protease ATPase subunit HslU">
    <location>
        <begin position="1"/>
        <end position="443"/>
    </location>
</feature>
<feature type="binding site" evidence="1">
    <location>
        <position position="18"/>
    </location>
    <ligand>
        <name>ATP</name>
        <dbReference type="ChEBI" id="CHEBI:30616"/>
    </ligand>
</feature>
<feature type="binding site" evidence="1">
    <location>
        <begin position="60"/>
        <end position="65"/>
    </location>
    <ligand>
        <name>ATP</name>
        <dbReference type="ChEBI" id="CHEBI:30616"/>
    </ligand>
</feature>
<feature type="binding site" evidence="1">
    <location>
        <position position="256"/>
    </location>
    <ligand>
        <name>ATP</name>
        <dbReference type="ChEBI" id="CHEBI:30616"/>
    </ligand>
</feature>
<feature type="binding site" evidence="1">
    <location>
        <position position="321"/>
    </location>
    <ligand>
        <name>ATP</name>
        <dbReference type="ChEBI" id="CHEBI:30616"/>
    </ligand>
</feature>
<feature type="binding site" evidence="1">
    <location>
        <position position="393"/>
    </location>
    <ligand>
        <name>ATP</name>
        <dbReference type="ChEBI" id="CHEBI:30616"/>
    </ligand>
</feature>
<accession>A1K2I6</accession>
<reference key="1">
    <citation type="journal article" date="2006" name="Nat. Biotechnol.">
        <title>Complete genome of the mutualistic, N2-fixing grass endophyte Azoarcus sp. strain BH72.</title>
        <authorList>
            <person name="Krause A."/>
            <person name="Ramakumar A."/>
            <person name="Bartels D."/>
            <person name="Battistoni F."/>
            <person name="Bekel T."/>
            <person name="Boch J."/>
            <person name="Boehm M."/>
            <person name="Friedrich F."/>
            <person name="Hurek T."/>
            <person name="Krause L."/>
            <person name="Linke B."/>
            <person name="McHardy A.C."/>
            <person name="Sarkar A."/>
            <person name="Schneiker S."/>
            <person name="Syed A.A."/>
            <person name="Thauer R."/>
            <person name="Vorhoelter F.-J."/>
            <person name="Weidner S."/>
            <person name="Puehler A."/>
            <person name="Reinhold-Hurek B."/>
            <person name="Kaiser O."/>
            <person name="Goesmann A."/>
        </authorList>
    </citation>
    <scope>NUCLEOTIDE SEQUENCE [LARGE SCALE GENOMIC DNA]</scope>
    <source>
        <strain>BH72</strain>
    </source>
</reference>
<gene>
    <name evidence="1" type="primary">hslU</name>
    <name type="ordered locus">azo0424</name>
</gene>
<comment type="function">
    <text evidence="1">ATPase subunit of a proteasome-like degradation complex; this subunit has chaperone activity. The binding of ATP and its subsequent hydrolysis by HslU are essential for unfolding of protein substrates subsequently hydrolyzed by HslV. HslU recognizes the N-terminal part of its protein substrates and unfolds these before they are guided to HslV for hydrolysis.</text>
</comment>
<comment type="subunit">
    <text evidence="1">A double ring-shaped homohexamer of HslV is capped on each side by a ring-shaped HslU homohexamer. The assembly of the HslU/HslV complex is dependent on binding of ATP.</text>
</comment>
<comment type="subcellular location">
    <subcellularLocation>
        <location evidence="1">Cytoplasm</location>
    </subcellularLocation>
</comment>
<comment type="similarity">
    <text evidence="1">Belongs to the ClpX chaperone family. HslU subfamily.</text>
</comment>
<organism>
    <name type="scientific">Azoarcus sp. (strain BH72)</name>
    <dbReference type="NCBI Taxonomy" id="418699"/>
    <lineage>
        <taxon>Bacteria</taxon>
        <taxon>Pseudomonadati</taxon>
        <taxon>Pseudomonadota</taxon>
        <taxon>Betaproteobacteria</taxon>
        <taxon>Rhodocyclales</taxon>
        <taxon>Zoogloeaceae</taxon>
        <taxon>Azoarcus</taxon>
    </lineage>
</organism>
<proteinExistence type="inferred from homology"/>
<evidence type="ECO:0000255" key="1">
    <source>
        <dbReference type="HAMAP-Rule" id="MF_00249"/>
    </source>
</evidence>
<protein>
    <recommendedName>
        <fullName evidence="1">ATP-dependent protease ATPase subunit HslU</fullName>
    </recommendedName>
    <alternativeName>
        <fullName evidence="1">Unfoldase HslU</fullName>
    </alternativeName>
</protein>
<name>HSLU_AZOSB</name>
<keyword id="KW-0067">ATP-binding</keyword>
<keyword id="KW-0143">Chaperone</keyword>
<keyword id="KW-0963">Cytoplasm</keyword>
<keyword id="KW-0547">Nucleotide-binding</keyword>
<keyword id="KW-1185">Reference proteome</keyword>
<dbReference type="EMBL" id="AM406670">
    <property type="protein sequence ID" value="CAL93041.1"/>
    <property type="molecule type" value="Genomic_DNA"/>
</dbReference>
<dbReference type="RefSeq" id="WP_011764159.1">
    <property type="nucleotide sequence ID" value="NC_008702.1"/>
</dbReference>
<dbReference type="SMR" id="A1K2I6"/>
<dbReference type="STRING" id="62928.azo0424"/>
<dbReference type="KEGG" id="azo:azo0424"/>
<dbReference type="eggNOG" id="COG1220">
    <property type="taxonomic scope" value="Bacteria"/>
</dbReference>
<dbReference type="HOGENOM" id="CLU_033123_0_0_4"/>
<dbReference type="Proteomes" id="UP000002588">
    <property type="component" value="Chromosome"/>
</dbReference>
<dbReference type="GO" id="GO:0009376">
    <property type="term" value="C:HslUV protease complex"/>
    <property type="evidence" value="ECO:0007669"/>
    <property type="project" value="UniProtKB-UniRule"/>
</dbReference>
<dbReference type="GO" id="GO:0005524">
    <property type="term" value="F:ATP binding"/>
    <property type="evidence" value="ECO:0007669"/>
    <property type="project" value="UniProtKB-UniRule"/>
</dbReference>
<dbReference type="GO" id="GO:0016887">
    <property type="term" value="F:ATP hydrolysis activity"/>
    <property type="evidence" value="ECO:0007669"/>
    <property type="project" value="InterPro"/>
</dbReference>
<dbReference type="GO" id="GO:0008233">
    <property type="term" value="F:peptidase activity"/>
    <property type="evidence" value="ECO:0007669"/>
    <property type="project" value="InterPro"/>
</dbReference>
<dbReference type="GO" id="GO:0036402">
    <property type="term" value="F:proteasome-activating activity"/>
    <property type="evidence" value="ECO:0007669"/>
    <property type="project" value="UniProtKB-UniRule"/>
</dbReference>
<dbReference type="GO" id="GO:0043335">
    <property type="term" value="P:protein unfolding"/>
    <property type="evidence" value="ECO:0007669"/>
    <property type="project" value="UniProtKB-UniRule"/>
</dbReference>
<dbReference type="GO" id="GO:0051603">
    <property type="term" value="P:proteolysis involved in protein catabolic process"/>
    <property type="evidence" value="ECO:0007669"/>
    <property type="project" value="TreeGrafter"/>
</dbReference>
<dbReference type="CDD" id="cd19498">
    <property type="entry name" value="RecA-like_HslU"/>
    <property type="match status" value="1"/>
</dbReference>
<dbReference type="FunFam" id="1.10.8.10:FF:000028">
    <property type="entry name" value="ATP-dependent protease ATPase subunit HslU"/>
    <property type="match status" value="1"/>
</dbReference>
<dbReference type="FunFam" id="3.40.50.300:FF:000213">
    <property type="entry name" value="ATP-dependent protease ATPase subunit HslU"/>
    <property type="match status" value="1"/>
</dbReference>
<dbReference type="FunFam" id="3.40.50.300:FF:000220">
    <property type="entry name" value="ATP-dependent protease ATPase subunit HslU"/>
    <property type="match status" value="1"/>
</dbReference>
<dbReference type="Gene3D" id="1.10.8.60">
    <property type="match status" value="1"/>
</dbReference>
<dbReference type="Gene3D" id="1.10.8.10">
    <property type="entry name" value="DNA helicase RuvA subunit, C-terminal domain"/>
    <property type="match status" value="1"/>
</dbReference>
<dbReference type="Gene3D" id="3.40.50.300">
    <property type="entry name" value="P-loop containing nucleotide triphosphate hydrolases"/>
    <property type="match status" value="2"/>
</dbReference>
<dbReference type="HAMAP" id="MF_00249">
    <property type="entry name" value="HslU"/>
    <property type="match status" value="1"/>
</dbReference>
<dbReference type="InterPro" id="IPR003593">
    <property type="entry name" value="AAA+_ATPase"/>
</dbReference>
<dbReference type="InterPro" id="IPR050052">
    <property type="entry name" value="ATP-dep_Clp_protease_ClpX"/>
</dbReference>
<dbReference type="InterPro" id="IPR003959">
    <property type="entry name" value="ATPase_AAA_core"/>
</dbReference>
<dbReference type="InterPro" id="IPR019489">
    <property type="entry name" value="Clp_ATPase_C"/>
</dbReference>
<dbReference type="InterPro" id="IPR004491">
    <property type="entry name" value="HslU"/>
</dbReference>
<dbReference type="InterPro" id="IPR027417">
    <property type="entry name" value="P-loop_NTPase"/>
</dbReference>
<dbReference type="NCBIfam" id="TIGR00390">
    <property type="entry name" value="hslU"/>
    <property type="match status" value="1"/>
</dbReference>
<dbReference type="NCBIfam" id="NF003544">
    <property type="entry name" value="PRK05201.1"/>
    <property type="match status" value="1"/>
</dbReference>
<dbReference type="PANTHER" id="PTHR48102">
    <property type="entry name" value="ATP-DEPENDENT CLP PROTEASE ATP-BINDING SUBUNIT CLPX-LIKE, MITOCHONDRIAL-RELATED"/>
    <property type="match status" value="1"/>
</dbReference>
<dbReference type="PANTHER" id="PTHR48102:SF3">
    <property type="entry name" value="ATP-DEPENDENT PROTEASE ATPASE SUBUNIT HSLU"/>
    <property type="match status" value="1"/>
</dbReference>
<dbReference type="Pfam" id="PF00004">
    <property type="entry name" value="AAA"/>
    <property type="match status" value="1"/>
</dbReference>
<dbReference type="Pfam" id="PF07724">
    <property type="entry name" value="AAA_2"/>
    <property type="match status" value="1"/>
</dbReference>
<dbReference type="SMART" id="SM00382">
    <property type="entry name" value="AAA"/>
    <property type="match status" value="1"/>
</dbReference>
<dbReference type="SMART" id="SM01086">
    <property type="entry name" value="ClpB_D2-small"/>
    <property type="match status" value="1"/>
</dbReference>
<dbReference type="SUPFAM" id="SSF52540">
    <property type="entry name" value="P-loop containing nucleoside triphosphate hydrolases"/>
    <property type="match status" value="1"/>
</dbReference>
<sequence>MTQMTPPEIVSELDKHIVGQARAKKAVAIALRNRWRRARIDEPLRSEITPKNILMIGPTGVGKTEIARRLARLANAPFIKVEATKFTEVGYVGRDVDTIIRDLVEIAIKDGRERAMRVVRDRALDAAEDRVLDVLLPPARPVGFSEPAQPQDSATRQKFRKKLREGELDDKEVEIEVASAPMQAEIFAPPGMEELTQQIQGMFQNLGNSRKKLRKLPIREALKLLADEEAARLINDEEVKTEALRAVEQNGIVFLDEVDKIAARADAHGADVSRQGVQRDLLPLVEGTTISTKYGMIKTDHILFIASGAFHLSKPSDLIPELQGRFPIRVELESLSVEDFERILTSTDACLTRQYEALLATDGVTLSFTPEGIRRLAEIAYQVNEKTENIGARRLYTVMEKLLEEVSFEAGKVGVDKLTVDAAYVDARLEVLAQREDLARYVL</sequence>